<dbReference type="EMBL" id="CP001010">
    <property type="protein sequence ID" value="ACB44265.1"/>
    <property type="molecule type" value="Genomic_DNA"/>
</dbReference>
<dbReference type="SMR" id="B1XV88"/>
<dbReference type="STRING" id="452638.Pnec_1092"/>
<dbReference type="KEGG" id="pne:Pnec_1092"/>
<dbReference type="eggNOG" id="COG0858">
    <property type="taxonomic scope" value="Bacteria"/>
</dbReference>
<dbReference type="HOGENOM" id="CLU_089475_5_1_4"/>
<dbReference type="OrthoDB" id="307788at2"/>
<dbReference type="GO" id="GO:0005829">
    <property type="term" value="C:cytosol"/>
    <property type="evidence" value="ECO:0007669"/>
    <property type="project" value="TreeGrafter"/>
</dbReference>
<dbReference type="GO" id="GO:0043024">
    <property type="term" value="F:ribosomal small subunit binding"/>
    <property type="evidence" value="ECO:0007669"/>
    <property type="project" value="TreeGrafter"/>
</dbReference>
<dbReference type="GO" id="GO:0030490">
    <property type="term" value="P:maturation of SSU-rRNA"/>
    <property type="evidence" value="ECO:0007669"/>
    <property type="project" value="UniProtKB-UniRule"/>
</dbReference>
<dbReference type="Gene3D" id="3.30.300.20">
    <property type="match status" value="1"/>
</dbReference>
<dbReference type="HAMAP" id="MF_00003">
    <property type="entry name" value="RbfA"/>
    <property type="match status" value="1"/>
</dbReference>
<dbReference type="InterPro" id="IPR015946">
    <property type="entry name" value="KH_dom-like_a/b"/>
</dbReference>
<dbReference type="InterPro" id="IPR000238">
    <property type="entry name" value="RbfA"/>
</dbReference>
<dbReference type="InterPro" id="IPR023799">
    <property type="entry name" value="RbfA_dom_sf"/>
</dbReference>
<dbReference type="NCBIfam" id="TIGR00082">
    <property type="entry name" value="rbfA"/>
    <property type="match status" value="1"/>
</dbReference>
<dbReference type="PANTHER" id="PTHR33515">
    <property type="entry name" value="RIBOSOME-BINDING FACTOR A, CHLOROPLASTIC-RELATED"/>
    <property type="match status" value="1"/>
</dbReference>
<dbReference type="PANTHER" id="PTHR33515:SF1">
    <property type="entry name" value="RIBOSOME-BINDING FACTOR A, CHLOROPLASTIC-RELATED"/>
    <property type="match status" value="1"/>
</dbReference>
<dbReference type="Pfam" id="PF02033">
    <property type="entry name" value="RBFA"/>
    <property type="match status" value="1"/>
</dbReference>
<dbReference type="SUPFAM" id="SSF89919">
    <property type="entry name" value="Ribosome-binding factor A, RbfA"/>
    <property type="match status" value="1"/>
</dbReference>
<feature type="chain" id="PRO_1000088914" description="Ribosome-binding factor A">
    <location>
        <begin position="1"/>
        <end position="122"/>
    </location>
</feature>
<gene>
    <name evidence="1" type="primary">rbfA</name>
    <name type="ordered locus">Pnec_1092</name>
</gene>
<sequence>MHKTSPHRNQRLADQIQRDLAELIPRELRSSSLGLITLQSIELTPDLAHAKVFFTVLGAEPEHALKALQEKAGYLYSLLFKRLHIHTVPTLHFHYDSSVEHGIEMSKLIDQAVESDQKDENK</sequence>
<comment type="function">
    <text evidence="1">One of several proteins that assist in the late maturation steps of the functional core of the 30S ribosomal subunit. Associates with free 30S ribosomal subunits (but not with 30S subunits that are part of 70S ribosomes or polysomes). Required for efficient processing of 16S rRNA. May interact with the 5'-terminal helix region of 16S rRNA.</text>
</comment>
<comment type="subunit">
    <text evidence="1">Monomer. Binds 30S ribosomal subunits, but not 50S ribosomal subunits or 70S ribosomes.</text>
</comment>
<comment type="subcellular location">
    <subcellularLocation>
        <location evidence="1">Cytoplasm</location>
    </subcellularLocation>
</comment>
<comment type="similarity">
    <text evidence="1">Belongs to the RbfA family.</text>
</comment>
<keyword id="KW-0963">Cytoplasm</keyword>
<keyword id="KW-0690">Ribosome biogenesis</keyword>
<name>RBFA_POLNS</name>
<protein>
    <recommendedName>
        <fullName evidence="1">Ribosome-binding factor A</fullName>
    </recommendedName>
</protein>
<reference key="1">
    <citation type="journal article" date="2013" name="Proc. Natl. Acad. Sci. U.S.A.">
        <title>Polynucleobacter necessarius, a model for genome reduction in both free-living and symbiotic bacteria.</title>
        <authorList>
            <person name="Boscaro V."/>
            <person name="Felletti M."/>
            <person name="Vannini C."/>
            <person name="Ackerman M.S."/>
            <person name="Chain P.S."/>
            <person name="Malfatti S."/>
            <person name="Vergez L.M."/>
            <person name="Shin M."/>
            <person name="Doak T.G."/>
            <person name="Lynch M."/>
            <person name="Petroni G."/>
        </authorList>
    </citation>
    <scope>NUCLEOTIDE SEQUENCE [LARGE SCALE GENOMIC DNA]</scope>
    <source>
        <strain>STIR1</strain>
    </source>
</reference>
<evidence type="ECO:0000255" key="1">
    <source>
        <dbReference type="HAMAP-Rule" id="MF_00003"/>
    </source>
</evidence>
<proteinExistence type="inferred from homology"/>
<organism>
    <name type="scientific">Polynucleobacter necessarius subsp. necessarius (strain STIR1)</name>
    <dbReference type="NCBI Taxonomy" id="452638"/>
    <lineage>
        <taxon>Bacteria</taxon>
        <taxon>Pseudomonadati</taxon>
        <taxon>Pseudomonadota</taxon>
        <taxon>Betaproteobacteria</taxon>
        <taxon>Burkholderiales</taxon>
        <taxon>Burkholderiaceae</taxon>
        <taxon>Polynucleobacter</taxon>
    </lineage>
</organism>
<accession>B1XV88</accession>